<organism>
    <name type="scientific">Gallus gallus</name>
    <name type="common">Chicken</name>
    <dbReference type="NCBI Taxonomy" id="9031"/>
    <lineage>
        <taxon>Eukaryota</taxon>
        <taxon>Metazoa</taxon>
        <taxon>Chordata</taxon>
        <taxon>Craniata</taxon>
        <taxon>Vertebrata</taxon>
        <taxon>Euteleostomi</taxon>
        <taxon>Archelosauria</taxon>
        <taxon>Archosauria</taxon>
        <taxon>Dinosauria</taxon>
        <taxon>Saurischia</taxon>
        <taxon>Theropoda</taxon>
        <taxon>Coelurosauria</taxon>
        <taxon>Aves</taxon>
        <taxon>Neognathae</taxon>
        <taxon>Galloanserae</taxon>
        <taxon>Galliformes</taxon>
        <taxon>Phasianidae</taxon>
        <taxon>Phasianinae</taxon>
        <taxon>Gallus</taxon>
    </lineage>
</organism>
<proteinExistence type="evidence at transcript level"/>
<reference key="1">
    <citation type="journal article" date="2005" name="Genome Biol.">
        <title>Full-length cDNAs from chicken bursal lymphocytes to facilitate gene function analysis.</title>
        <authorList>
            <person name="Caldwell R.B."/>
            <person name="Kierzek A.M."/>
            <person name="Arakawa H."/>
            <person name="Bezzubov Y."/>
            <person name="Zaim J."/>
            <person name="Fiedler P."/>
            <person name="Kutter S."/>
            <person name="Blagodatski A."/>
            <person name="Kostovska D."/>
            <person name="Koter M."/>
            <person name="Plachy J."/>
            <person name="Carninci P."/>
            <person name="Hayashizaki Y."/>
            <person name="Buerstedde J.-M."/>
        </authorList>
    </citation>
    <scope>NUCLEOTIDE SEQUENCE [LARGE SCALE MRNA]</scope>
    <source>
        <strain>CB</strain>
        <tissue>Bursa of Fabricius</tissue>
    </source>
</reference>
<feature type="chain" id="PRO_0000278206" description="NmrA-like family domain-containing protein 1">
    <location>
        <begin position="1"/>
        <end position="296"/>
    </location>
</feature>
<feature type="binding site" evidence="1">
    <location>
        <begin position="11"/>
        <end position="16"/>
    </location>
    <ligand>
        <name>NADP(+)</name>
        <dbReference type="ChEBI" id="CHEBI:58349"/>
    </ligand>
</feature>
<feature type="binding site" evidence="1">
    <location>
        <begin position="37"/>
        <end position="41"/>
    </location>
    <ligand>
        <name>NADP(+)</name>
        <dbReference type="ChEBI" id="CHEBI:58349"/>
    </ligand>
</feature>
<feature type="binding site" evidence="1">
    <location>
        <begin position="58"/>
        <end position="59"/>
    </location>
    <ligand>
        <name>NADP(+)</name>
        <dbReference type="ChEBI" id="CHEBI:58349"/>
    </ligand>
</feature>
<feature type="binding site" evidence="1">
    <location>
        <begin position="79"/>
        <end position="81"/>
    </location>
    <ligand>
        <name>NADP(+)</name>
        <dbReference type="ChEBI" id="CHEBI:58349"/>
    </ligand>
</feature>
<feature type="binding site" evidence="1">
    <location>
        <position position="133"/>
    </location>
    <ligand>
        <name>NADP(+)</name>
        <dbReference type="ChEBI" id="CHEBI:58349"/>
    </ligand>
</feature>
<feature type="binding site" evidence="1">
    <location>
        <begin position="155"/>
        <end position="158"/>
    </location>
    <ligand>
        <name>NADP(+)</name>
        <dbReference type="ChEBI" id="CHEBI:58349"/>
    </ligand>
</feature>
<evidence type="ECO:0000250" key="1"/>
<evidence type="ECO:0000305" key="2"/>
<name>NMRL1_CHICK</name>
<sequence length="296" mass="32689">MTSKKLIVVFGATGAQGGSVARALLEDGAFAVRAVTRSPGRKEAAELRRRGAELMRADQDDERSLEEALTGAHGAFVVTNFWEHCSKEKEVAQGRRLADLSKRLGLQHVVYSGLENVKQLTKGRLEVLHFDGKGEVEEYFRAVNVPTTTIRLPFYYENFLSSFKPQKAPQGDKLLLGLPMGDTPMDGMAVEDLGPIVLSLLKSPEQYIGQVIGLSAGKLTVAEYAAAFSQQTGKTVEDSKITPEEYEKLGFPGAKELADMFRFYALKPDRNVELTMKLNPKARTFQQWLADNKAAF</sequence>
<accession>Q5ZID0</accession>
<protein>
    <recommendedName>
        <fullName>NmrA-like family domain-containing protein 1</fullName>
    </recommendedName>
</protein>
<dbReference type="EMBL" id="AJ720854">
    <property type="protein sequence ID" value="CAG32513.1"/>
    <property type="molecule type" value="mRNA"/>
</dbReference>
<dbReference type="RefSeq" id="NP_001025816.1">
    <property type="nucleotide sequence ID" value="NM_001030645.1"/>
</dbReference>
<dbReference type="SMR" id="Q5ZID0"/>
<dbReference type="FunCoup" id="Q5ZID0">
    <property type="interactions" value="69"/>
</dbReference>
<dbReference type="STRING" id="9031.ENSGALP00000054785"/>
<dbReference type="GlyGen" id="Q5ZID0">
    <property type="glycosylation" value="1 site"/>
</dbReference>
<dbReference type="PaxDb" id="9031-ENSGALP00000012689"/>
<dbReference type="GeneID" id="416672"/>
<dbReference type="KEGG" id="gga:416672"/>
<dbReference type="CTD" id="57407"/>
<dbReference type="VEuPathDB" id="HostDB:geneid_416672"/>
<dbReference type="eggNOG" id="ENOG502QQEA">
    <property type="taxonomic scope" value="Eukaryota"/>
</dbReference>
<dbReference type="HOGENOM" id="CLU_007383_8_2_1"/>
<dbReference type="InParanoid" id="Q5ZID0"/>
<dbReference type="OrthoDB" id="300709at2759"/>
<dbReference type="PhylomeDB" id="Q5ZID0"/>
<dbReference type="PRO" id="PR:Q5ZID0"/>
<dbReference type="Proteomes" id="UP000000539">
    <property type="component" value="Unassembled WGS sequence"/>
</dbReference>
<dbReference type="GO" id="GO:0005634">
    <property type="term" value="C:nucleus"/>
    <property type="evidence" value="ECO:0000318"/>
    <property type="project" value="GO_Central"/>
</dbReference>
<dbReference type="GO" id="GO:0048471">
    <property type="term" value="C:perinuclear region of cytoplasm"/>
    <property type="evidence" value="ECO:0007669"/>
    <property type="project" value="UniProtKB-SubCell"/>
</dbReference>
<dbReference type="CDD" id="cd05251">
    <property type="entry name" value="NmrA_like_SDR_a"/>
    <property type="match status" value="1"/>
</dbReference>
<dbReference type="FunFam" id="3.40.50.720:FF:000181">
    <property type="entry name" value="NmrA-like family domain-containing protein 1"/>
    <property type="match status" value="1"/>
</dbReference>
<dbReference type="Gene3D" id="3.40.50.720">
    <property type="entry name" value="NAD(P)-binding Rossmann-like Domain"/>
    <property type="match status" value="1"/>
</dbReference>
<dbReference type="Gene3D" id="3.90.25.10">
    <property type="entry name" value="UDP-galactose 4-epimerase, domain 1"/>
    <property type="match status" value="1"/>
</dbReference>
<dbReference type="InterPro" id="IPR036291">
    <property type="entry name" value="NAD(P)-bd_dom_sf"/>
</dbReference>
<dbReference type="InterPro" id="IPR008030">
    <property type="entry name" value="NmrA-like"/>
</dbReference>
<dbReference type="InterPro" id="IPR051164">
    <property type="entry name" value="NmrA-like_oxidored"/>
</dbReference>
<dbReference type="PANTHER" id="PTHR42748">
    <property type="entry name" value="NITROGEN METABOLITE REPRESSION PROTEIN NMRA FAMILY MEMBER"/>
    <property type="match status" value="1"/>
</dbReference>
<dbReference type="PANTHER" id="PTHR42748:SF7">
    <property type="entry name" value="NMRA LIKE REDOX SENSOR 1-RELATED"/>
    <property type="match status" value="1"/>
</dbReference>
<dbReference type="Pfam" id="PF05368">
    <property type="entry name" value="NmrA"/>
    <property type="match status" value="1"/>
</dbReference>
<dbReference type="SUPFAM" id="SSF51735">
    <property type="entry name" value="NAD(P)-binding Rossmann-fold domains"/>
    <property type="match status" value="1"/>
</dbReference>
<keyword id="KW-0963">Cytoplasm</keyword>
<keyword id="KW-0521">NADP</keyword>
<keyword id="KW-0539">Nucleus</keyword>
<keyword id="KW-1185">Reference proteome</keyword>
<comment type="function">
    <text evidence="1">Redox sensor protein. Undergoes restructuring and subcellular redistribution in response to changes in intracellular NADPH/NADP(+) levels (By similarity).</text>
</comment>
<comment type="subunit">
    <text evidence="1">Homodimer.</text>
</comment>
<comment type="subcellular location">
    <subcellularLocation>
        <location evidence="1">Cytoplasm</location>
    </subcellularLocation>
    <subcellularLocation>
        <location evidence="1">Cytoplasm</location>
        <location evidence="1">Perinuclear region</location>
    </subcellularLocation>
    <subcellularLocation>
        <location evidence="1">Nucleus</location>
    </subcellularLocation>
</comment>
<comment type="similarity">
    <text evidence="2">Belongs to the NmrA-type oxidoreductase family.</text>
</comment>
<comment type="caution">
    <text evidence="2">Lacks the conserved Tyr residue in the active site triad of Ser-Tyr-Lys necessary for dehydrogenase activity, suggesting that it has no oxidoreductase activity.</text>
</comment>
<gene>
    <name type="primary">NMRAL1</name>
    <name type="ORF">RCJMB04_27o15</name>
</gene>